<reference key="1">
    <citation type="journal article" date="2004" name="Genome Res.">
        <title>The complete genome and proteome of Mycoplasma mobile.</title>
        <authorList>
            <person name="Jaffe J.D."/>
            <person name="Stange-Thomann N."/>
            <person name="Smith C."/>
            <person name="DeCaprio D."/>
            <person name="Fisher S."/>
            <person name="Butler J."/>
            <person name="Calvo S."/>
            <person name="Elkins T."/>
            <person name="FitzGerald M.G."/>
            <person name="Hafez N."/>
            <person name="Kodira C.D."/>
            <person name="Major J."/>
            <person name="Wang S."/>
            <person name="Wilkinson J."/>
            <person name="Nicol R."/>
            <person name="Nusbaum C."/>
            <person name="Birren B."/>
            <person name="Berg H.C."/>
            <person name="Church G.M."/>
        </authorList>
    </citation>
    <scope>NUCLEOTIDE SEQUENCE [LARGE SCALE GENOMIC DNA]</scope>
    <source>
        <strain>ATCC 43663 / NCTC 11711 / 163 K</strain>
    </source>
</reference>
<gene>
    <name evidence="1" type="primary">scpA</name>
    <name type="ordered locus">MMOB4770</name>
</gene>
<accession>Q6KHG7</accession>
<keyword id="KW-0131">Cell cycle</keyword>
<keyword id="KW-0132">Cell division</keyword>
<keyword id="KW-0159">Chromosome partition</keyword>
<keyword id="KW-0963">Cytoplasm</keyword>
<keyword id="KW-1185">Reference proteome</keyword>
<protein>
    <recommendedName>
        <fullName evidence="1">Segregation and condensation protein A</fullName>
    </recommendedName>
</protein>
<sequence>MNKFEFNLENFDGPLDLLLSLVKDKKADLFTIDLADLATQYLEIINHLEDSNVDVASEYLVMAATLIHIKAKMLLLNPEEEDEEIKEDKEMLLKQLIEYQQFKEVAKKLRQQESIRSEIFIKDPSNYDEYYRETDETLLDGRSNSLSLMNTLRKMFERVHAENLRQTKIEAVHVNPEQRIKEIRDLFDEFGEEVDFAKIFNVPTITHFVITFLVLLDLARKQEIKLIQDKEFGEIRIIKIKGVENEQ</sequence>
<comment type="function">
    <text evidence="1">Participates in chromosomal partition during cell division. May act via the formation of a condensin-like complex containing Smc and ScpB that pull DNA away from mid-cell into both cell halves.</text>
</comment>
<comment type="subunit">
    <text evidence="1">Component of a cohesin-like complex composed of ScpA, ScpB and the Smc homodimer, in which ScpA and ScpB bind to the head domain of Smc. The presence of the three proteins is required for the association of the complex with DNA.</text>
</comment>
<comment type="subcellular location">
    <subcellularLocation>
        <location evidence="1">Cytoplasm</location>
    </subcellularLocation>
    <text evidence="1">Associated with two foci at the outer edges of the nucleoid region in young cells, and at four foci within both cell halves in older cells.</text>
</comment>
<comment type="similarity">
    <text evidence="1">Belongs to the ScpA family.</text>
</comment>
<feature type="chain" id="PRO_0000211095" description="Segregation and condensation protein A">
    <location>
        <begin position="1"/>
        <end position="247"/>
    </location>
</feature>
<proteinExistence type="inferred from homology"/>
<name>SCPA_MYCM1</name>
<dbReference type="EMBL" id="AE017308">
    <property type="protein sequence ID" value="AAT27963.1"/>
    <property type="molecule type" value="Genomic_DNA"/>
</dbReference>
<dbReference type="RefSeq" id="WP_011264997.1">
    <property type="nucleotide sequence ID" value="NC_006908.1"/>
</dbReference>
<dbReference type="SMR" id="Q6KHG7"/>
<dbReference type="STRING" id="267748.MMOB4770"/>
<dbReference type="KEGG" id="mmo:MMOB4770"/>
<dbReference type="eggNOG" id="COG1354">
    <property type="taxonomic scope" value="Bacteria"/>
</dbReference>
<dbReference type="HOGENOM" id="CLU_038686_3_1_14"/>
<dbReference type="OrthoDB" id="9811016at2"/>
<dbReference type="Proteomes" id="UP000009072">
    <property type="component" value="Chromosome"/>
</dbReference>
<dbReference type="GO" id="GO:0005737">
    <property type="term" value="C:cytoplasm"/>
    <property type="evidence" value="ECO:0007669"/>
    <property type="project" value="UniProtKB-SubCell"/>
</dbReference>
<dbReference type="GO" id="GO:0051301">
    <property type="term" value="P:cell division"/>
    <property type="evidence" value="ECO:0007669"/>
    <property type="project" value="UniProtKB-KW"/>
</dbReference>
<dbReference type="GO" id="GO:0007059">
    <property type="term" value="P:chromosome segregation"/>
    <property type="evidence" value="ECO:0007669"/>
    <property type="project" value="UniProtKB-UniRule"/>
</dbReference>
<dbReference type="GO" id="GO:0006260">
    <property type="term" value="P:DNA replication"/>
    <property type="evidence" value="ECO:0007669"/>
    <property type="project" value="UniProtKB-UniRule"/>
</dbReference>
<dbReference type="Gene3D" id="6.10.250.2410">
    <property type="match status" value="1"/>
</dbReference>
<dbReference type="Gene3D" id="1.10.10.580">
    <property type="entry name" value="Structural maintenance of chromosome 1. Chain E"/>
    <property type="match status" value="1"/>
</dbReference>
<dbReference type="HAMAP" id="MF_01805">
    <property type="entry name" value="ScpA"/>
    <property type="match status" value="1"/>
</dbReference>
<dbReference type="InterPro" id="IPR003768">
    <property type="entry name" value="ScpA"/>
</dbReference>
<dbReference type="InterPro" id="IPR023093">
    <property type="entry name" value="ScpA-like_C"/>
</dbReference>
<dbReference type="NCBIfam" id="NF000994">
    <property type="entry name" value="PRK00104.1-3"/>
    <property type="match status" value="1"/>
</dbReference>
<dbReference type="PANTHER" id="PTHR33969">
    <property type="entry name" value="SEGREGATION AND CONDENSATION PROTEIN A"/>
    <property type="match status" value="1"/>
</dbReference>
<dbReference type="PANTHER" id="PTHR33969:SF2">
    <property type="entry name" value="SEGREGATION AND CONDENSATION PROTEIN A"/>
    <property type="match status" value="1"/>
</dbReference>
<dbReference type="Pfam" id="PF02616">
    <property type="entry name" value="SMC_ScpA"/>
    <property type="match status" value="1"/>
</dbReference>
<evidence type="ECO:0000255" key="1">
    <source>
        <dbReference type="HAMAP-Rule" id="MF_01805"/>
    </source>
</evidence>
<organism>
    <name type="scientific">Mycoplasma mobile (strain ATCC 43663 / 163K / NCTC 11711)</name>
    <name type="common">Mesomycoplasma mobile</name>
    <dbReference type="NCBI Taxonomy" id="267748"/>
    <lineage>
        <taxon>Bacteria</taxon>
        <taxon>Bacillati</taxon>
        <taxon>Mycoplasmatota</taxon>
        <taxon>Mycoplasmoidales</taxon>
        <taxon>Metamycoplasmataceae</taxon>
        <taxon>Mesomycoplasma</taxon>
    </lineage>
</organism>